<reference key="1">
    <citation type="journal article" date="2007" name="Proc. Natl. Acad. Sci. U.S.A.">
        <title>The Orientia tsutsugamushi genome reveals massive proliferation of conjugative type IV secretion system and host-cell interaction genes.</title>
        <authorList>
            <person name="Cho N.-H."/>
            <person name="Kim H.-R."/>
            <person name="Lee J.-H."/>
            <person name="Kim S.-Y."/>
            <person name="Kim J."/>
            <person name="Cha S."/>
            <person name="Kim S.-Y."/>
            <person name="Darby A.C."/>
            <person name="Fuxelius H.-H."/>
            <person name="Yin J."/>
            <person name="Kim J.H."/>
            <person name="Kim J."/>
            <person name="Lee S.J."/>
            <person name="Koh Y.-S."/>
            <person name="Jang W.-J."/>
            <person name="Park K.-H."/>
            <person name="Andersson S.G.E."/>
            <person name="Choi M.-S."/>
            <person name="Kim I.-S."/>
        </authorList>
    </citation>
    <scope>NUCLEOTIDE SEQUENCE [LARGE SCALE GENOMIC DNA]</scope>
    <source>
        <strain>Boryong</strain>
    </source>
</reference>
<name>MIAB_ORITB</name>
<gene>
    <name evidence="1" type="primary">miaB</name>
    <name type="ordered locus">OTBS_0187</name>
</gene>
<protein>
    <recommendedName>
        <fullName evidence="1">tRNA-2-methylthio-N(6)-dimethylallyladenosine synthase</fullName>
        <ecNumber evidence="1">2.8.4.3</ecNumber>
    </recommendedName>
    <alternativeName>
        <fullName evidence="1">(Dimethylallyl)adenosine tRNA methylthiotransferase MiaB</fullName>
    </alternativeName>
    <alternativeName>
        <fullName evidence="1">tRNA-i(6)A37 methylthiotransferase</fullName>
    </alternativeName>
</protein>
<dbReference type="EC" id="2.8.4.3" evidence="1"/>
<dbReference type="EMBL" id="AM494475">
    <property type="protein sequence ID" value="CAM79253.1"/>
    <property type="molecule type" value="Genomic_DNA"/>
</dbReference>
<dbReference type="RefSeq" id="WP_011944318.1">
    <property type="nucleotide sequence ID" value="NC_009488.1"/>
</dbReference>
<dbReference type="SMR" id="A5CC78"/>
<dbReference type="KEGG" id="ots:OTBS_0187"/>
<dbReference type="eggNOG" id="COG0621">
    <property type="taxonomic scope" value="Bacteria"/>
</dbReference>
<dbReference type="HOGENOM" id="CLU_018697_2_0_5"/>
<dbReference type="Proteomes" id="UP000001565">
    <property type="component" value="Chromosome"/>
</dbReference>
<dbReference type="GO" id="GO:0005829">
    <property type="term" value="C:cytosol"/>
    <property type="evidence" value="ECO:0007669"/>
    <property type="project" value="TreeGrafter"/>
</dbReference>
<dbReference type="GO" id="GO:0051539">
    <property type="term" value="F:4 iron, 4 sulfur cluster binding"/>
    <property type="evidence" value="ECO:0007669"/>
    <property type="project" value="UniProtKB-UniRule"/>
</dbReference>
<dbReference type="GO" id="GO:0046872">
    <property type="term" value="F:metal ion binding"/>
    <property type="evidence" value="ECO:0007669"/>
    <property type="project" value="UniProtKB-KW"/>
</dbReference>
<dbReference type="GO" id="GO:0035597">
    <property type="term" value="F:N6-isopentenyladenosine methylthiotransferase activity"/>
    <property type="evidence" value="ECO:0007669"/>
    <property type="project" value="TreeGrafter"/>
</dbReference>
<dbReference type="CDD" id="cd01335">
    <property type="entry name" value="Radical_SAM"/>
    <property type="match status" value="1"/>
</dbReference>
<dbReference type="FunFam" id="3.40.50.12160:FF:000003">
    <property type="entry name" value="CDK5 regulatory subunit-associated protein 1"/>
    <property type="match status" value="1"/>
</dbReference>
<dbReference type="FunFam" id="3.80.30.20:FF:000001">
    <property type="entry name" value="tRNA-2-methylthio-N(6)-dimethylallyladenosine synthase 2"/>
    <property type="match status" value="1"/>
</dbReference>
<dbReference type="Gene3D" id="3.40.50.12160">
    <property type="entry name" value="Methylthiotransferase, N-terminal domain"/>
    <property type="match status" value="1"/>
</dbReference>
<dbReference type="Gene3D" id="3.80.30.20">
    <property type="entry name" value="tm_1862 like domain"/>
    <property type="match status" value="1"/>
</dbReference>
<dbReference type="HAMAP" id="MF_01864">
    <property type="entry name" value="tRNA_metthiotr_MiaB"/>
    <property type="match status" value="1"/>
</dbReference>
<dbReference type="InterPro" id="IPR006638">
    <property type="entry name" value="Elp3/MiaA/NifB-like_rSAM"/>
</dbReference>
<dbReference type="InterPro" id="IPR005839">
    <property type="entry name" value="Methylthiotransferase"/>
</dbReference>
<dbReference type="InterPro" id="IPR020612">
    <property type="entry name" value="Methylthiotransferase_CS"/>
</dbReference>
<dbReference type="InterPro" id="IPR013848">
    <property type="entry name" value="Methylthiotransferase_N"/>
</dbReference>
<dbReference type="InterPro" id="IPR038135">
    <property type="entry name" value="Methylthiotransferase_N_sf"/>
</dbReference>
<dbReference type="InterPro" id="IPR006463">
    <property type="entry name" value="MiaB_methiolase"/>
</dbReference>
<dbReference type="InterPro" id="IPR007197">
    <property type="entry name" value="rSAM"/>
</dbReference>
<dbReference type="InterPro" id="IPR023404">
    <property type="entry name" value="rSAM_horseshoe"/>
</dbReference>
<dbReference type="InterPro" id="IPR002792">
    <property type="entry name" value="TRAM_dom"/>
</dbReference>
<dbReference type="NCBIfam" id="TIGR01574">
    <property type="entry name" value="miaB-methiolase"/>
    <property type="match status" value="1"/>
</dbReference>
<dbReference type="NCBIfam" id="TIGR00089">
    <property type="entry name" value="MiaB/RimO family radical SAM methylthiotransferase"/>
    <property type="match status" value="1"/>
</dbReference>
<dbReference type="PANTHER" id="PTHR43020">
    <property type="entry name" value="CDK5 REGULATORY SUBUNIT-ASSOCIATED PROTEIN 1"/>
    <property type="match status" value="1"/>
</dbReference>
<dbReference type="PANTHER" id="PTHR43020:SF2">
    <property type="entry name" value="MITOCHONDRIAL TRNA METHYLTHIOTRANSFERASE CDK5RAP1"/>
    <property type="match status" value="1"/>
</dbReference>
<dbReference type="Pfam" id="PF04055">
    <property type="entry name" value="Radical_SAM"/>
    <property type="match status" value="1"/>
</dbReference>
<dbReference type="Pfam" id="PF01938">
    <property type="entry name" value="TRAM"/>
    <property type="match status" value="1"/>
</dbReference>
<dbReference type="Pfam" id="PF00919">
    <property type="entry name" value="UPF0004"/>
    <property type="match status" value="1"/>
</dbReference>
<dbReference type="SFLD" id="SFLDF00273">
    <property type="entry name" value="(dimethylallyl)adenosine_tRNA"/>
    <property type="match status" value="1"/>
</dbReference>
<dbReference type="SFLD" id="SFLDG01082">
    <property type="entry name" value="B12-binding_domain_containing"/>
    <property type="match status" value="1"/>
</dbReference>
<dbReference type="SFLD" id="SFLDG01061">
    <property type="entry name" value="methylthiotransferase"/>
    <property type="match status" value="1"/>
</dbReference>
<dbReference type="SMART" id="SM00729">
    <property type="entry name" value="Elp3"/>
    <property type="match status" value="1"/>
</dbReference>
<dbReference type="SUPFAM" id="SSF102114">
    <property type="entry name" value="Radical SAM enzymes"/>
    <property type="match status" value="1"/>
</dbReference>
<dbReference type="PROSITE" id="PS51449">
    <property type="entry name" value="MTTASE_N"/>
    <property type="match status" value="1"/>
</dbReference>
<dbReference type="PROSITE" id="PS01278">
    <property type="entry name" value="MTTASE_RADICAL"/>
    <property type="match status" value="1"/>
</dbReference>
<dbReference type="PROSITE" id="PS51918">
    <property type="entry name" value="RADICAL_SAM"/>
    <property type="match status" value="1"/>
</dbReference>
<dbReference type="PROSITE" id="PS50926">
    <property type="entry name" value="TRAM"/>
    <property type="match status" value="1"/>
</dbReference>
<organism>
    <name type="scientific">Orientia tsutsugamushi (strain Boryong)</name>
    <name type="common">Rickettsia tsutsugamushi</name>
    <dbReference type="NCBI Taxonomy" id="357244"/>
    <lineage>
        <taxon>Bacteria</taxon>
        <taxon>Pseudomonadati</taxon>
        <taxon>Pseudomonadota</taxon>
        <taxon>Alphaproteobacteria</taxon>
        <taxon>Rickettsiales</taxon>
        <taxon>Rickettsiaceae</taxon>
        <taxon>Rickettsieae</taxon>
        <taxon>Orientia</taxon>
    </lineage>
</organism>
<accession>A5CC78</accession>
<proteinExistence type="inferred from homology"/>
<comment type="function">
    <text evidence="1">Catalyzes the methylthiolation of N6-(dimethylallyl)adenosine (i(6)A), leading to the formation of 2-methylthio-N6-(dimethylallyl)adenosine (ms(2)i(6)A) at position 37 in tRNAs that read codons beginning with uridine.</text>
</comment>
<comment type="catalytic activity">
    <reaction evidence="1">
        <text>N(6)-dimethylallyladenosine(37) in tRNA + (sulfur carrier)-SH + AH2 + 2 S-adenosyl-L-methionine = 2-methylsulfanyl-N(6)-dimethylallyladenosine(37) in tRNA + (sulfur carrier)-H + 5'-deoxyadenosine + L-methionine + A + S-adenosyl-L-homocysteine + 2 H(+)</text>
        <dbReference type="Rhea" id="RHEA:37067"/>
        <dbReference type="Rhea" id="RHEA-COMP:10375"/>
        <dbReference type="Rhea" id="RHEA-COMP:10376"/>
        <dbReference type="Rhea" id="RHEA-COMP:14737"/>
        <dbReference type="Rhea" id="RHEA-COMP:14739"/>
        <dbReference type="ChEBI" id="CHEBI:13193"/>
        <dbReference type="ChEBI" id="CHEBI:15378"/>
        <dbReference type="ChEBI" id="CHEBI:17319"/>
        <dbReference type="ChEBI" id="CHEBI:17499"/>
        <dbReference type="ChEBI" id="CHEBI:29917"/>
        <dbReference type="ChEBI" id="CHEBI:57844"/>
        <dbReference type="ChEBI" id="CHEBI:57856"/>
        <dbReference type="ChEBI" id="CHEBI:59789"/>
        <dbReference type="ChEBI" id="CHEBI:64428"/>
        <dbReference type="ChEBI" id="CHEBI:74415"/>
        <dbReference type="ChEBI" id="CHEBI:74417"/>
        <dbReference type="EC" id="2.8.4.3"/>
    </reaction>
</comment>
<comment type="cofactor">
    <cofactor evidence="1">
        <name>[4Fe-4S] cluster</name>
        <dbReference type="ChEBI" id="CHEBI:49883"/>
    </cofactor>
    <text evidence="1">Binds 2 [4Fe-4S] clusters. One cluster is coordinated with 3 cysteines and an exchangeable S-adenosyl-L-methionine.</text>
</comment>
<comment type="subunit">
    <text evidence="1">Monomer.</text>
</comment>
<comment type="subcellular location">
    <subcellularLocation>
        <location evidence="1">Cytoplasm</location>
    </subcellularLocation>
</comment>
<comment type="similarity">
    <text evidence="1">Belongs to the methylthiotransferase family. MiaB subfamily.</text>
</comment>
<keyword id="KW-0004">4Fe-4S</keyword>
<keyword id="KW-0963">Cytoplasm</keyword>
<keyword id="KW-0408">Iron</keyword>
<keyword id="KW-0411">Iron-sulfur</keyword>
<keyword id="KW-0479">Metal-binding</keyword>
<keyword id="KW-1185">Reference proteome</keyword>
<keyword id="KW-0949">S-adenosyl-L-methionine</keyword>
<keyword id="KW-0808">Transferase</keyword>
<keyword id="KW-0819">tRNA processing</keyword>
<evidence type="ECO:0000255" key="1">
    <source>
        <dbReference type="HAMAP-Rule" id="MF_01864"/>
    </source>
</evidence>
<evidence type="ECO:0000255" key="2">
    <source>
        <dbReference type="PROSITE-ProRule" id="PRU01266"/>
    </source>
</evidence>
<sequence>MNKMLYIKTYGCQMNVYDSNRMVDLLETQGYNIVANMADASVIILNTCHIREKASEKMYSELGRIKKLQQSRLKAGKSKAKIIVAGCVGQAEGEEIFIREPAVNIIVGPQSYYNLPTMLEKLDSGTENHLIDLDFVEAAKFNKLPEVLKSPTVSGLVSVQEGCDKFCTFCVVPYTRGAEFSRPLEQVYREVLNIAQQGAKEVVLVGQNVSAYHGKDENGKECSLADLIKYVAKIDKIKRIRYITSHPNDMTDQLLSLHATEEKLMPFLHLPVQSGSNKILKLMNRRHTRERYLEIIQQLRELRPDIVISSDIIVGFPGEDDEDFEATLSLAKEAKFGQCYSFKYSQRPGTPAAVKQQISEEVKQHRLSILQAQLMLQQLECNQKLIGKVVPVLFDRDGKYDGQIIGKTPYMQSVCIMNEKDNNLYGKIVNVKILSASASSLFGEVCPNS</sequence>
<feature type="chain" id="PRO_0000374422" description="tRNA-2-methylthio-N(6)-dimethylallyladenosine synthase">
    <location>
        <begin position="1"/>
        <end position="449"/>
    </location>
</feature>
<feature type="domain" description="MTTase N-terminal" evidence="1">
    <location>
        <begin position="3"/>
        <end position="124"/>
    </location>
</feature>
<feature type="domain" description="Radical SAM core" evidence="2">
    <location>
        <begin position="149"/>
        <end position="380"/>
    </location>
</feature>
<feature type="domain" description="TRAM" evidence="1">
    <location>
        <begin position="383"/>
        <end position="447"/>
    </location>
</feature>
<feature type="binding site" evidence="1">
    <location>
        <position position="12"/>
    </location>
    <ligand>
        <name>[4Fe-4S] cluster</name>
        <dbReference type="ChEBI" id="CHEBI:49883"/>
        <label>1</label>
    </ligand>
</feature>
<feature type="binding site" evidence="1">
    <location>
        <position position="48"/>
    </location>
    <ligand>
        <name>[4Fe-4S] cluster</name>
        <dbReference type="ChEBI" id="CHEBI:49883"/>
        <label>1</label>
    </ligand>
</feature>
<feature type="binding site" evidence="1">
    <location>
        <position position="87"/>
    </location>
    <ligand>
        <name>[4Fe-4S] cluster</name>
        <dbReference type="ChEBI" id="CHEBI:49883"/>
        <label>1</label>
    </ligand>
</feature>
<feature type="binding site" evidence="1">
    <location>
        <position position="163"/>
    </location>
    <ligand>
        <name>[4Fe-4S] cluster</name>
        <dbReference type="ChEBI" id="CHEBI:49883"/>
        <label>2</label>
        <note>4Fe-4S-S-AdoMet</note>
    </ligand>
</feature>
<feature type="binding site" evidence="1">
    <location>
        <position position="167"/>
    </location>
    <ligand>
        <name>[4Fe-4S] cluster</name>
        <dbReference type="ChEBI" id="CHEBI:49883"/>
        <label>2</label>
        <note>4Fe-4S-S-AdoMet</note>
    </ligand>
</feature>
<feature type="binding site" evidence="1">
    <location>
        <position position="170"/>
    </location>
    <ligand>
        <name>[4Fe-4S] cluster</name>
        <dbReference type="ChEBI" id="CHEBI:49883"/>
        <label>2</label>
        <note>4Fe-4S-S-AdoMet</note>
    </ligand>
</feature>